<sequence>MVFDARDGADKLVIALPKGRILKEAMPLIEAAGLSPEPSFDDPDSRQLRFSTSDPRVDIIRVRSFDVATFVAFGAAHIGVAGNDVILEFNYPELYAPLDLGIGACRLSVAEAERFSAEDDPGRWSHIRVATKYPEITRRHFAARGVQAECIKLNGAMELAPALGLCRRIVDLVSSGATLKANGLVEVERILDVTSRLVVNRTAMKVRSREMTAWIERFREACDAVAA</sequence>
<accession>Q2RQM6</accession>
<evidence type="ECO:0000255" key="1">
    <source>
        <dbReference type="HAMAP-Rule" id="MF_01018"/>
    </source>
</evidence>
<organism>
    <name type="scientific">Rhodospirillum rubrum (strain ATCC 11170 / ATH 1.1.1 / DSM 467 / LMG 4362 / NCIMB 8255 / S1)</name>
    <dbReference type="NCBI Taxonomy" id="269796"/>
    <lineage>
        <taxon>Bacteria</taxon>
        <taxon>Pseudomonadati</taxon>
        <taxon>Pseudomonadota</taxon>
        <taxon>Alphaproteobacteria</taxon>
        <taxon>Rhodospirillales</taxon>
        <taxon>Rhodospirillaceae</taxon>
        <taxon>Rhodospirillum</taxon>
    </lineage>
</organism>
<proteinExistence type="inferred from homology"/>
<feature type="chain" id="PRO_0000229332" description="ATP phosphoribosyltransferase">
    <location>
        <begin position="1"/>
        <end position="227"/>
    </location>
</feature>
<keyword id="KW-0028">Amino-acid biosynthesis</keyword>
<keyword id="KW-0067">ATP-binding</keyword>
<keyword id="KW-0963">Cytoplasm</keyword>
<keyword id="KW-0328">Glycosyltransferase</keyword>
<keyword id="KW-0368">Histidine biosynthesis</keyword>
<keyword id="KW-0547">Nucleotide-binding</keyword>
<keyword id="KW-1185">Reference proteome</keyword>
<keyword id="KW-0808">Transferase</keyword>
<comment type="function">
    <text evidence="1">Catalyzes the condensation of ATP and 5-phosphoribose 1-diphosphate to form N'-(5'-phosphoribosyl)-ATP (PR-ATP). Has a crucial role in the pathway because the rate of histidine biosynthesis seems to be controlled primarily by regulation of HisG enzymatic activity.</text>
</comment>
<comment type="catalytic activity">
    <reaction evidence="1">
        <text>1-(5-phospho-beta-D-ribosyl)-ATP + diphosphate = 5-phospho-alpha-D-ribose 1-diphosphate + ATP</text>
        <dbReference type="Rhea" id="RHEA:18473"/>
        <dbReference type="ChEBI" id="CHEBI:30616"/>
        <dbReference type="ChEBI" id="CHEBI:33019"/>
        <dbReference type="ChEBI" id="CHEBI:58017"/>
        <dbReference type="ChEBI" id="CHEBI:73183"/>
        <dbReference type="EC" id="2.4.2.17"/>
    </reaction>
</comment>
<comment type="pathway">
    <text evidence="1">Amino-acid biosynthesis; L-histidine biosynthesis; L-histidine from 5-phospho-alpha-D-ribose 1-diphosphate: step 1/9.</text>
</comment>
<comment type="subunit">
    <text evidence="1">Heteromultimer composed of HisG and HisZ subunits.</text>
</comment>
<comment type="subcellular location">
    <subcellularLocation>
        <location evidence="1">Cytoplasm</location>
    </subcellularLocation>
</comment>
<comment type="domain">
    <text>Lacks the C-terminal regulatory region which is replaced by HisZ.</text>
</comment>
<comment type="similarity">
    <text evidence="1">Belongs to the ATP phosphoribosyltransferase family. Short subfamily.</text>
</comment>
<protein>
    <recommendedName>
        <fullName evidence="1">ATP phosphoribosyltransferase</fullName>
        <shortName evidence="1">ATP-PRT</shortName>
        <shortName evidence="1">ATP-PRTase</shortName>
        <ecNumber evidence="1">2.4.2.17</ecNumber>
    </recommendedName>
</protein>
<name>HIS1_RHORT</name>
<gene>
    <name evidence="1" type="primary">hisG</name>
    <name type="ordered locus">Rru_A2772</name>
</gene>
<reference key="1">
    <citation type="journal article" date="2011" name="Stand. Genomic Sci.">
        <title>Complete genome sequence of Rhodospirillum rubrum type strain (S1).</title>
        <authorList>
            <person name="Munk A.C."/>
            <person name="Copeland A."/>
            <person name="Lucas S."/>
            <person name="Lapidus A."/>
            <person name="Del Rio T.G."/>
            <person name="Barry K."/>
            <person name="Detter J.C."/>
            <person name="Hammon N."/>
            <person name="Israni S."/>
            <person name="Pitluck S."/>
            <person name="Brettin T."/>
            <person name="Bruce D."/>
            <person name="Han C."/>
            <person name="Tapia R."/>
            <person name="Gilna P."/>
            <person name="Schmutz J."/>
            <person name="Larimer F."/>
            <person name="Land M."/>
            <person name="Kyrpides N.C."/>
            <person name="Mavromatis K."/>
            <person name="Richardson P."/>
            <person name="Rohde M."/>
            <person name="Goeker M."/>
            <person name="Klenk H.P."/>
            <person name="Zhang Y."/>
            <person name="Roberts G.P."/>
            <person name="Reslewic S."/>
            <person name="Schwartz D.C."/>
        </authorList>
    </citation>
    <scope>NUCLEOTIDE SEQUENCE [LARGE SCALE GENOMIC DNA]</scope>
    <source>
        <strain>ATCC 11170 / ATH 1.1.1 / DSM 467 / LMG 4362 / NCIMB 8255 / S1</strain>
    </source>
</reference>
<dbReference type="EC" id="2.4.2.17" evidence="1"/>
<dbReference type="EMBL" id="CP000230">
    <property type="protein sequence ID" value="ABC23569.1"/>
    <property type="molecule type" value="Genomic_DNA"/>
</dbReference>
<dbReference type="RefSeq" id="WP_011390582.1">
    <property type="nucleotide sequence ID" value="NC_007643.1"/>
</dbReference>
<dbReference type="RefSeq" id="YP_427856.1">
    <property type="nucleotide sequence ID" value="NC_007643.1"/>
</dbReference>
<dbReference type="SMR" id="Q2RQM6"/>
<dbReference type="STRING" id="269796.Rru_A2772"/>
<dbReference type="EnsemblBacteria" id="ABC23569">
    <property type="protein sequence ID" value="ABC23569"/>
    <property type="gene ID" value="Rru_A2772"/>
</dbReference>
<dbReference type="KEGG" id="rru:Rru_A2772"/>
<dbReference type="PATRIC" id="fig|269796.9.peg.2878"/>
<dbReference type="eggNOG" id="COG0040">
    <property type="taxonomic scope" value="Bacteria"/>
</dbReference>
<dbReference type="HOGENOM" id="CLU_038115_2_0_5"/>
<dbReference type="PhylomeDB" id="Q2RQM6"/>
<dbReference type="UniPathway" id="UPA00031">
    <property type="reaction ID" value="UER00006"/>
</dbReference>
<dbReference type="Proteomes" id="UP000001929">
    <property type="component" value="Chromosome"/>
</dbReference>
<dbReference type="GO" id="GO:0005737">
    <property type="term" value="C:cytoplasm"/>
    <property type="evidence" value="ECO:0007669"/>
    <property type="project" value="UniProtKB-SubCell"/>
</dbReference>
<dbReference type="GO" id="GO:0005524">
    <property type="term" value="F:ATP binding"/>
    <property type="evidence" value="ECO:0007669"/>
    <property type="project" value="UniProtKB-KW"/>
</dbReference>
<dbReference type="GO" id="GO:0003879">
    <property type="term" value="F:ATP phosphoribosyltransferase activity"/>
    <property type="evidence" value="ECO:0007669"/>
    <property type="project" value="UniProtKB-UniRule"/>
</dbReference>
<dbReference type="GO" id="GO:0000105">
    <property type="term" value="P:L-histidine biosynthetic process"/>
    <property type="evidence" value="ECO:0007669"/>
    <property type="project" value="UniProtKB-UniRule"/>
</dbReference>
<dbReference type="CDD" id="cd13595">
    <property type="entry name" value="PBP2_HisGs"/>
    <property type="match status" value="1"/>
</dbReference>
<dbReference type="FunFam" id="3.40.190.10:FF:000008">
    <property type="entry name" value="ATP phosphoribosyltransferase"/>
    <property type="match status" value="1"/>
</dbReference>
<dbReference type="Gene3D" id="3.40.190.10">
    <property type="entry name" value="Periplasmic binding protein-like II"/>
    <property type="match status" value="2"/>
</dbReference>
<dbReference type="HAMAP" id="MF_01018">
    <property type="entry name" value="HisG_Short"/>
    <property type="match status" value="1"/>
</dbReference>
<dbReference type="InterPro" id="IPR013820">
    <property type="entry name" value="ATP_PRibTrfase_cat"/>
</dbReference>
<dbReference type="InterPro" id="IPR001348">
    <property type="entry name" value="ATP_PRibTrfase_HisG"/>
</dbReference>
<dbReference type="InterPro" id="IPR024893">
    <property type="entry name" value="ATP_PRibTrfase_HisG_short"/>
</dbReference>
<dbReference type="NCBIfam" id="TIGR00070">
    <property type="entry name" value="hisG"/>
    <property type="match status" value="1"/>
</dbReference>
<dbReference type="PANTHER" id="PTHR21403:SF8">
    <property type="entry name" value="ATP PHOSPHORIBOSYLTRANSFERASE"/>
    <property type="match status" value="1"/>
</dbReference>
<dbReference type="PANTHER" id="PTHR21403">
    <property type="entry name" value="ATP PHOSPHORIBOSYLTRANSFERASE ATP-PRTASE"/>
    <property type="match status" value="1"/>
</dbReference>
<dbReference type="Pfam" id="PF01634">
    <property type="entry name" value="HisG"/>
    <property type="match status" value="1"/>
</dbReference>
<dbReference type="SUPFAM" id="SSF53850">
    <property type="entry name" value="Periplasmic binding protein-like II"/>
    <property type="match status" value="1"/>
</dbReference>